<keyword id="KW-0030">Aminoacyl-tRNA synthetase</keyword>
<keyword id="KW-0067">ATP-binding</keyword>
<keyword id="KW-0963">Cytoplasm</keyword>
<keyword id="KW-0436">Ligase</keyword>
<keyword id="KW-0547">Nucleotide-binding</keyword>
<keyword id="KW-0648">Protein biosynthesis</keyword>
<organism>
    <name type="scientific">Ehrlichia ruminantium (strain Welgevonden)</name>
    <dbReference type="NCBI Taxonomy" id="254945"/>
    <lineage>
        <taxon>Bacteria</taxon>
        <taxon>Pseudomonadati</taxon>
        <taxon>Pseudomonadota</taxon>
        <taxon>Alphaproteobacteria</taxon>
        <taxon>Rickettsiales</taxon>
        <taxon>Anaplasmataceae</taxon>
        <taxon>Ehrlichia</taxon>
    </lineage>
</organism>
<gene>
    <name evidence="1" type="primary">gltX2</name>
    <name type="ordered locus">Erum4310</name>
    <name type="ordered locus">ERWE_CDS_04490</name>
</gene>
<comment type="function">
    <text evidence="1">Catalyzes the attachment of glutamate to tRNA(Glu) in a two-step reaction: glutamate is first activated by ATP to form Glu-AMP and then transferred to the acceptor end of tRNA(Glu).</text>
</comment>
<comment type="catalytic activity">
    <reaction evidence="1">
        <text>tRNA(Glu) + L-glutamate + ATP = L-glutamyl-tRNA(Glu) + AMP + diphosphate</text>
        <dbReference type="Rhea" id="RHEA:23540"/>
        <dbReference type="Rhea" id="RHEA-COMP:9663"/>
        <dbReference type="Rhea" id="RHEA-COMP:9680"/>
        <dbReference type="ChEBI" id="CHEBI:29985"/>
        <dbReference type="ChEBI" id="CHEBI:30616"/>
        <dbReference type="ChEBI" id="CHEBI:33019"/>
        <dbReference type="ChEBI" id="CHEBI:78442"/>
        <dbReference type="ChEBI" id="CHEBI:78520"/>
        <dbReference type="ChEBI" id="CHEBI:456215"/>
        <dbReference type="EC" id="6.1.1.17"/>
    </reaction>
</comment>
<comment type="subunit">
    <text evidence="1">Monomer.</text>
</comment>
<comment type="subcellular location">
    <subcellularLocation>
        <location evidence="1">Cytoplasm</location>
    </subcellularLocation>
</comment>
<comment type="similarity">
    <text evidence="1">Belongs to the class-I aminoacyl-tRNA synthetase family. Glutamate--tRNA ligase type 1 subfamily.</text>
</comment>
<reference key="1">
    <citation type="journal article" date="2005" name="Proc. Natl. Acad. Sci. U.S.A.">
        <title>The genome of the heartwater agent Ehrlichia ruminantium contains multiple tandem repeats of actively variable copy number.</title>
        <authorList>
            <person name="Collins N.E."/>
            <person name="Liebenberg J."/>
            <person name="de Villiers E.P."/>
            <person name="Brayton K.A."/>
            <person name="Louw E."/>
            <person name="Pretorius A."/>
            <person name="Faber F.E."/>
            <person name="van Heerden H."/>
            <person name="Josemans A."/>
            <person name="van Kleef M."/>
            <person name="Steyn H.C."/>
            <person name="van Strijp M.F."/>
            <person name="Zweygarth E."/>
            <person name="Jongejan F."/>
            <person name="Maillard J.C."/>
            <person name="Berthier D."/>
            <person name="Botha M."/>
            <person name="Joubert F."/>
            <person name="Corton C.H."/>
            <person name="Thomson N.R."/>
            <person name="Allsopp M.T."/>
            <person name="Allsopp B.A."/>
        </authorList>
    </citation>
    <scope>NUCLEOTIDE SEQUENCE [LARGE SCALE GENOMIC DNA]</scope>
    <source>
        <strain>Welgevonden</strain>
    </source>
</reference>
<reference key="2">
    <citation type="journal article" date="2006" name="J. Bacteriol.">
        <title>Comparative genomic analysis of three strains of Ehrlichia ruminantium reveals an active process of genome size plasticity.</title>
        <authorList>
            <person name="Frutos R."/>
            <person name="Viari A."/>
            <person name="Ferraz C."/>
            <person name="Morgat A."/>
            <person name="Eychenie S."/>
            <person name="Kandassamy Y."/>
            <person name="Chantal I."/>
            <person name="Bensaid A."/>
            <person name="Coissac E."/>
            <person name="Vachiery N."/>
            <person name="Demaille J."/>
            <person name="Martinez D."/>
        </authorList>
    </citation>
    <scope>NUCLEOTIDE SEQUENCE [LARGE SCALE GENOMIC DNA]</scope>
    <source>
        <strain>Welgevonden</strain>
    </source>
</reference>
<protein>
    <recommendedName>
        <fullName evidence="1">Glutamate--tRNA ligase 2</fullName>
        <ecNumber evidence="1">6.1.1.17</ecNumber>
    </recommendedName>
    <alternativeName>
        <fullName evidence="1">Glutamyl-tRNA synthetase 2</fullName>
        <shortName evidence="1">GluRS 2</shortName>
    </alternativeName>
</protein>
<feature type="chain" id="PRO_0000119561" description="Glutamate--tRNA ligase 2">
    <location>
        <begin position="1"/>
        <end position="470"/>
    </location>
</feature>
<feature type="short sequence motif" description="'HIGH' region" evidence="1">
    <location>
        <begin position="11"/>
        <end position="21"/>
    </location>
</feature>
<feature type="short sequence motif" description="'KMSKS' region" evidence="1">
    <location>
        <begin position="238"/>
        <end position="242"/>
    </location>
</feature>
<feature type="binding site" evidence="1">
    <location>
        <position position="241"/>
    </location>
    <ligand>
        <name>ATP</name>
        <dbReference type="ChEBI" id="CHEBI:30616"/>
    </ligand>
</feature>
<name>SYE2_EHRRW</name>
<sequence>MLNHVVTRFAPSPTGHLHLGGARTALFNWLYAKHNNGKFLLRIEDTDSKRSSKELIDSIINSMIWLNIQHDGDIILQSSRISRHIEIANQLILNDKAYYCYCSEEEINLEKEEYTKKGLHYKHNCIWKNRNPPIGNCSKVIRLHSDTEGITEFKDKVYGTIAVNNVQLDDMVLLRSNNTPTYLLSVVVDDYDMGITHIIRGTDHLTNTARQLLIYNALGWKPPEFAHIPLIHDENGNKLSKRHHALGIHEYKNAGILPEALLNYLLRMGWSHGNDEVITIDEAIRWFSIDKVGQSPARLDSKKLEFLNNHYINATNNATIIEMIIPIIEKTIGYKVNTEKIGYLLNGINELKKRTKNLVNLANESLFYVEDIPISFDQESLIIIKSNHDILSILYDNLSKVLNDDWNNSTLTSMIKNIVKDYNTKIHNIYHCLRASIIGRINAPSIIDIMVNFQREECLNRIKYARDMVK</sequence>
<evidence type="ECO:0000255" key="1">
    <source>
        <dbReference type="HAMAP-Rule" id="MF_00022"/>
    </source>
</evidence>
<dbReference type="EC" id="6.1.1.17" evidence="1"/>
<dbReference type="EMBL" id="CR767821">
    <property type="protein sequence ID" value="CAH58157.1"/>
    <property type="molecule type" value="Genomic_DNA"/>
</dbReference>
<dbReference type="EMBL" id="CR925678">
    <property type="protein sequence ID" value="CAI26943.1"/>
    <property type="molecule type" value="Genomic_DNA"/>
</dbReference>
<dbReference type="RefSeq" id="WP_011155113.1">
    <property type="nucleotide sequence ID" value="NC_005295.2"/>
</dbReference>
<dbReference type="SMR" id="Q5HB98"/>
<dbReference type="GeneID" id="33057947"/>
<dbReference type="KEGG" id="eru:Erum4310"/>
<dbReference type="KEGG" id="erw:ERWE_CDS_04490"/>
<dbReference type="eggNOG" id="COG0008">
    <property type="taxonomic scope" value="Bacteria"/>
</dbReference>
<dbReference type="HOGENOM" id="CLU_015768_6_0_5"/>
<dbReference type="Proteomes" id="UP000001021">
    <property type="component" value="Chromosome"/>
</dbReference>
<dbReference type="GO" id="GO:0005829">
    <property type="term" value="C:cytosol"/>
    <property type="evidence" value="ECO:0007669"/>
    <property type="project" value="TreeGrafter"/>
</dbReference>
<dbReference type="GO" id="GO:0005524">
    <property type="term" value="F:ATP binding"/>
    <property type="evidence" value="ECO:0007669"/>
    <property type="project" value="UniProtKB-UniRule"/>
</dbReference>
<dbReference type="GO" id="GO:0004818">
    <property type="term" value="F:glutamate-tRNA ligase activity"/>
    <property type="evidence" value="ECO:0007669"/>
    <property type="project" value="UniProtKB-UniRule"/>
</dbReference>
<dbReference type="GO" id="GO:0000049">
    <property type="term" value="F:tRNA binding"/>
    <property type="evidence" value="ECO:0007669"/>
    <property type="project" value="InterPro"/>
</dbReference>
<dbReference type="GO" id="GO:0008270">
    <property type="term" value="F:zinc ion binding"/>
    <property type="evidence" value="ECO:0007669"/>
    <property type="project" value="InterPro"/>
</dbReference>
<dbReference type="GO" id="GO:0006424">
    <property type="term" value="P:glutamyl-tRNA aminoacylation"/>
    <property type="evidence" value="ECO:0007669"/>
    <property type="project" value="UniProtKB-UniRule"/>
</dbReference>
<dbReference type="CDD" id="cd00808">
    <property type="entry name" value="GluRS_core"/>
    <property type="match status" value="1"/>
</dbReference>
<dbReference type="FunFam" id="3.40.50.620:FF:000007">
    <property type="entry name" value="Glutamate--tRNA ligase"/>
    <property type="match status" value="1"/>
</dbReference>
<dbReference type="Gene3D" id="1.10.10.350">
    <property type="match status" value="1"/>
</dbReference>
<dbReference type="Gene3D" id="3.40.50.620">
    <property type="entry name" value="HUPs"/>
    <property type="match status" value="1"/>
</dbReference>
<dbReference type="HAMAP" id="MF_00022">
    <property type="entry name" value="Glu_tRNA_synth_type1"/>
    <property type="match status" value="1"/>
</dbReference>
<dbReference type="InterPro" id="IPR045462">
    <property type="entry name" value="aa-tRNA-synth_I_cd-bd"/>
</dbReference>
<dbReference type="InterPro" id="IPR020751">
    <property type="entry name" value="aa-tRNA-synth_I_codon-bd_sub2"/>
</dbReference>
<dbReference type="InterPro" id="IPR001412">
    <property type="entry name" value="aa-tRNA-synth_I_CS"/>
</dbReference>
<dbReference type="InterPro" id="IPR008925">
    <property type="entry name" value="aa_tRNA-synth_I_cd-bd_sf"/>
</dbReference>
<dbReference type="InterPro" id="IPR004527">
    <property type="entry name" value="Glu-tRNA-ligase_bac/mito"/>
</dbReference>
<dbReference type="InterPro" id="IPR000924">
    <property type="entry name" value="Glu/Gln-tRNA-synth"/>
</dbReference>
<dbReference type="InterPro" id="IPR020058">
    <property type="entry name" value="Glu/Gln-tRNA-synth_Ib_cat-dom"/>
</dbReference>
<dbReference type="InterPro" id="IPR049940">
    <property type="entry name" value="GluQ/Sye"/>
</dbReference>
<dbReference type="InterPro" id="IPR033910">
    <property type="entry name" value="GluRS_core"/>
</dbReference>
<dbReference type="InterPro" id="IPR014729">
    <property type="entry name" value="Rossmann-like_a/b/a_fold"/>
</dbReference>
<dbReference type="NCBIfam" id="TIGR00464">
    <property type="entry name" value="gltX_bact"/>
    <property type="match status" value="1"/>
</dbReference>
<dbReference type="PANTHER" id="PTHR43311">
    <property type="entry name" value="GLUTAMATE--TRNA LIGASE"/>
    <property type="match status" value="1"/>
</dbReference>
<dbReference type="PANTHER" id="PTHR43311:SF2">
    <property type="entry name" value="GLUTAMATE--TRNA LIGASE, MITOCHONDRIAL-RELATED"/>
    <property type="match status" value="1"/>
</dbReference>
<dbReference type="Pfam" id="PF19269">
    <property type="entry name" value="Anticodon_2"/>
    <property type="match status" value="1"/>
</dbReference>
<dbReference type="Pfam" id="PF00749">
    <property type="entry name" value="tRNA-synt_1c"/>
    <property type="match status" value="1"/>
</dbReference>
<dbReference type="PRINTS" id="PR00987">
    <property type="entry name" value="TRNASYNTHGLU"/>
</dbReference>
<dbReference type="SUPFAM" id="SSF48163">
    <property type="entry name" value="An anticodon-binding domain of class I aminoacyl-tRNA synthetases"/>
    <property type="match status" value="1"/>
</dbReference>
<dbReference type="SUPFAM" id="SSF52374">
    <property type="entry name" value="Nucleotidylyl transferase"/>
    <property type="match status" value="1"/>
</dbReference>
<dbReference type="PROSITE" id="PS00178">
    <property type="entry name" value="AA_TRNA_LIGASE_I"/>
    <property type="match status" value="1"/>
</dbReference>
<accession>Q5HB98</accession>
<accession>Q5FEZ6</accession>
<proteinExistence type="inferred from homology"/>